<comment type="function">
    <text evidence="1 4 11">Catalyzes the reversible isomerization of alpha-D-glucose 1-phosphate to alpha-D-glucose 6-phosphate (PubMed:1328221). The mechanism proceeds via the intermediate compound alpha-D-glucose 1,6-bisphosphate (Probable). This enzyme participates in both the breakdown and synthesis of glucose (By similarity).</text>
</comment>
<comment type="catalytic activity">
    <reaction evidence="4">
        <text>alpha-D-glucose 1-phosphate = alpha-D-glucose 6-phosphate</text>
        <dbReference type="Rhea" id="RHEA:23536"/>
        <dbReference type="ChEBI" id="CHEBI:58225"/>
        <dbReference type="ChEBI" id="CHEBI:58601"/>
        <dbReference type="EC" id="5.4.2.2"/>
    </reaction>
</comment>
<comment type="catalytic activity">
    <reaction evidence="11">
        <text>O-phospho-L-seryl-[protein] + alpha-D-glucose 1-phosphate = alpha-D-glucose 1,6-bisphosphate + L-seryl-[protein]</text>
        <dbReference type="Rhea" id="RHEA:68748"/>
        <dbReference type="Rhea" id="RHEA-COMP:9863"/>
        <dbReference type="Rhea" id="RHEA-COMP:11604"/>
        <dbReference type="ChEBI" id="CHEBI:29999"/>
        <dbReference type="ChEBI" id="CHEBI:58392"/>
        <dbReference type="ChEBI" id="CHEBI:58601"/>
        <dbReference type="ChEBI" id="CHEBI:83421"/>
    </reaction>
</comment>
<comment type="catalytic activity">
    <reaction evidence="11">
        <text>alpha-D-glucose 1,6-bisphosphate + L-seryl-[protein] = O-phospho-L-seryl-[protein] + alpha-D-glucose 6-phosphate</text>
        <dbReference type="Rhea" id="RHEA:68752"/>
        <dbReference type="Rhea" id="RHEA-COMP:9863"/>
        <dbReference type="Rhea" id="RHEA-COMP:11604"/>
        <dbReference type="ChEBI" id="CHEBI:29999"/>
        <dbReference type="ChEBI" id="CHEBI:58225"/>
        <dbReference type="ChEBI" id="CHEBI:58392"/>
        <dbReference type="ChEBI" id="CHEBI:83421"/>
    </reaction>
</comment>
<comment type="cofactor">
    <cofactor evidence="5">
        <name>Mg(2+)</name>
        <dbReference type="ChEBI" id="CHEBI:18420"/>
    </cofactor>
    <text evidence="5">Binds 1 Mg(2+) ion per subunit.</text>
</comment>
<comment type="activity regulation">
    <text evidence="12">Glucose-1,6-bisphosphate enhances phosphorylation of the active site Ser-117, and thereby increases enzyme activity.</text>
</comment>
<comment type="subunit">
    <text evidence="5 7">Monomer.</text>
</comment>
<comment type="subcellular location">
    <molecule>Isoform 1</molecule>
    <subcellularLocation>
        <location>Cytoplasm</location>
    </subcellularLocation>
</comment>
<comment type="subcellular location">
    <molecule>Isoform 2</molecule>
    <subcellularLocation>
        <location evidence="4">Sarcoplasmic reticulum</location>
    </subcellularLocation>
    <text evidence="4">Localizes to the junctional skeletal sarcoplasmic reticulum, probably by association with phospholipids and/or other proteins.</text>
</comment>
<comment type="alternative products">
    <event type="alternative splicing"/>
    <isoform>
        <id>P00949-1</id>
        <name>1</name>
        <sequence type="displayed"/>
    </isoform>
    <isoform>
        <id>P00949-2</id>
        <name>2</name>
        <sequence type="described" ref="VSP_004690 VSP_004691 VSP_004692 VSP_004693"/>
    </isoform>
</comment>
<comment type="PTM">
    <text evidence="4">Isoform 2 is the major calmodulin-dependent phosphoprotein in junctional skeletal sarcoplasmic reticulum vesicles.</text>
</comment>
<comment type="PTM">
    <text evidence="1">Phosphorylation at Thr-467 by PAK1 significantly enhances enzymatic activity.</text>
</comment>
<comment type="similarity">
    <text evidence="10">Belongs to the phosphohexose mutase family.</text>
</comment>
<evidence type="ECO:0000250" key="1">
    <source>
        <dbReference type="UniProtKB" id="P36871"/>
    </source>
</evidence>
<evidence type="ECO:0000250" key="2">
    <source>
        <dbReference type="UniProtKB" id="P38652"/>
    </source>
</evidence>
<evidence type="ECO:0000250" key="3">
    <source>
        <dbReference type="UniProtKB" id="Q9D0F9"/>
    </source>
</evidence>
<evidence type="ECO:0000269" key="4">
    <source>
    </source>
</evidence>
<evidence type="ECO:0000269" key="5">
    <source>
    </source>
</evidence>
<evidence type="ECO:0000269" key="6">
    <source>
    </source>
</evidence>
<evidence type="ECO:0000269" key="7">
    <source>
    </source>
</evidence>
<evidence type="ECO:0000269" key="8">
    <source ref="8"/>
</evidence>
<evidence type="ECO:0000303" key="9">
    <source>
    </source>
</evidence>
<evidence type="ECO:0000305" key="10"/>
<evidence type="ECO:0000305" key="11">
    <source>
    </source>
</evidence>
<evidence type="ECO:0000305" key="12">
    <source>
    </source>
</evidence>
<evidence type="ECO:0007744" key="13">
    <source>
        <dbReference type="PDB" id="1C47"/>
    </source>
</evidence>
<evidence type="ECO:0007744" key="14">
    <source>
        <dbReference type="PDB" id="1C4G"/>
    </source>
</evidence>
<evidence type="ECO:0007744" key="15">
    <source>
        <dbReference type="PDB" id="1LXT"/>
    </source>
</evidence>
<evidence type="ECO:0007744" key="16">
    <source>
        <dbReference type="PDB" id="3PMG"/>
    </source>
</evidence>
<evidence type="ECO:0007829" key="17">
    <source>
        <dbReference type="PDB" id="1C47"/>
    </source>
</evidence>
<evidence type="ECO:0007829" key="18">
    <source>
        <dbReference type="PDB" id="1JDY"/>
    </source>
</evidence>
<evidence type="ECO:0007829" key="19">
    <source>
        <dbReference type="PDB" id="1LXT"/>
    </source>
</evidence>
<evidence type="ECO:0007829" key="20">
    <source>
        <dbReference type="PDB" id="3PMG"/>
    </source>
</evidence>
<dbReference type="EC" id="5.4.2.2" evidence="4"/>
<dbReference type="EMBL" id="M97664">
    <property type="protein sequence ID" value="AAA31454.1"/>
    <property type="molecule type" value="mRNA"/>
</dbReference>
<dbReference type="EMBL" id="M97663">
    <property type="protein sequence ID" value="AAA31453.1"/>
    <property type="molecule type" value="mRNA"/>
</dbReference>
<dbReference type="PIR" id="A45077">
    <property type="entry name" value="PMRBI"/>
</dbReference>
<dbReference type="PIR" id="B41801">
    <property type="entry name" value="PMRB"/>
</dbReference>
<dbReference type="RefSeq" id="NP_001075785.1">
    <molecule id="P00949-2"/>
    <property type="nucleotide sequence ID" value="NM_001082316.1"/>
</dbReference>
<dbReference type="PDB" id="1C47">
    <property type="method" value="X-ray"/>
    <property type="resolution" value="2.70 A"/>
    <property type="chains" value="A/B=2-562"/>
</dbReference>
<dbReference type="PDB" id="1C4G">
    <property type="method" value="X-ray"/>
    <property type="resolution" value="2.70 A"/>
    <property type="chains" value="A/B=2-562"/>
</dbReference>
<dbReference type="PDB" id="1JDY">
    <property type="method" value="X-ray"/>
    <property type="resolution" value="2.70 A"/>
    <property type="chains" value="A/B=2-562"/>
</dbReference>
<dbReference type="PDB" id="1LXT">
    <property type="method" value="X-ray"/>
    <property type="resolution" value="2.70 A"/>
    <property type="chains" value="A/B=2-562"/>
</dbReference>
<dbReference type="PDB" id="1VKL">
    <property type="method" value="X-ray"/>
    <property type="resolution" value="2.70 A"/>
    <property type="chains" value="A/B=2-562"/>
</dbReference>
<dbReference type="PDB" id="3PMG">
    <property type="method" value="X-ray"/>
    <property type="resolution" value="2.40 A"/>
    <property type="chains" value="A/B=2-562"/>
</dbReference>
<dbReference type="PDBsum" id="1C47"/>
<dbReference type="PDBsum" id="1C4G"/>
<dbReference type="PDBsum" id="1JDY"/>
<dbReference type="PDBsum" id="1LXT"/>
<dbReference type="PDBsum" id="1VKL"/>
<dbReference type="PDBsum" id="3PMG"/>
<dbReference type="PCDDB" id="P00949"/>
<dbReference type="SMR" id="P00949"/>
<dbReference type="FunCoup" id="P00949">
    <property type="interactions" value="603"/>
</dbReference>
<dbReference type="STRING" id="9986.ENSOCUP00000025628"/>
<dbReference type="iPTMnet" id="P00949"/>
<dbReference type="PaxDb" id="9986-ENSOCUP00000025628"/>
<dbReference type="GeneID" id="100009155"/>
<dbReference type="KEGG" id="ocu:100009155"/>
<dbReference type="CTD" id="5236"/>
<dbReference type="eggNOG" id="KOG0027">
    <property type="taxonomic scope" value="Eukaryota"/>
</dbReference>
<dbReference type="eggNOG" id="KOG0625">
    <property type="taxonomic scope" value="Eukaryota"/>
</dbReference>
<dbReference type="InParanoid" id="P00949"/>
<dbReference type="OrthoDB" id="2291at2759"/>
<dbReference type="EvolutionaryTrace" id="P00949"/>
<dbReference type="Proteomes" id="UP000001811">
    <property type="component" value="Unplaced"/>
</dbReference>
<dbReference type="GO" id="GO:0005829">
    <property type="term" value="C:cytosol"/>
    <property type="evidence" value="ECO:0007669"/>
    <property type="project" value="TreeGrafter"/>
</dbReference>
<dbReference type="GO" id="GO:0016529">
    <property type="term" value="C:sarcoplasmic reticulum"/>
    <property type="evidence" value="ECO:0007669"/>
    <property type="project" value="UniProtKB-SubCell"/>
</dbReference>
<dbReference type="GO" id="GO:0000287">
    <property type="term" value="F:magnesium ion binding"/>
    <property type="evidence" value="ECO:0000314"/>
    <property type="project" value="UniProtKB"/>
</dbReference>
<dbReference type="GO" id="GO:0004614">
    <property type="term" value="F:phosphoglucomutase activity"/>
    <property type="evidence" value="ECO:0000314"/>
    <property type="project" value="UniProtKB"/>
</dbReference>
<dbReference type="GO" id="GO:0006006">
    <property type="term" value="P:glucose metabolic process"/>
    <property type="evidence" value="ECO:0000314"/>
    <property type="project" value="UniProtKB"/>
</dbReference>
<dbReference type="CDD" id="cd03085">
    <property type="entry name" value="PGM1"/>
    <property type="match status" value="1"/>
</dbReference>
<dbReference type="FunFam" id="3.30.310.50:FF:000002">
    <property type="entry name" value="Phosphoglucomutase 5"/>
    <property type="match status" value="1"/>
</dbReference>
<dbReference type="FunFam" id="3.40.120.10:FF:000004">
    <property type="entry name" value="Phosphoglucomutase 5"/>
    <property type="match status" value="1"/>
</dbReference>
<dbReference type="FunFam" id="3.40.120.10:FF:000005">
    <property type="entry name" value="Phosphoglucomutase 5"/>
    <property type="match status" value="1"/>
</dbReference>
<dbReference type="FunFam" id="3.40.120.10:FF:000007">
    <property type="entry name" value="Phosphoglucomutase 5"/>
    <property type="match status" value="1"/>
</dbReference>
<dbReference type="Gene3D" id="3.40.120.10">
    <property type="entry name" value="Alpha-D-Glucose-1,6-Bisphosphate, subunit A, domain 3"/>
    <property type="match status" value="3"/>
</dbReference>
<dbReference type="Gene3D" id="3.30.310.50">
    <property type="entry name" value="Alpha-D-phosphohexomutase, C-terminal domain"/>
    <property type="match status" value="1"/>
</dbReference>
<dbReference type="InterPro" id="IPR005844">
    <property type="entry name" value="A-D-PHexomutase_a/b/a-I"/>
</dbReference>
<dbReference type="InterPro" id="IPR016055">
    <property type="entry name" value="A-D-PHexomutase_a/b/a-I/II/III"/>
</dbReference>
<dbReference type="InterPro" id="IPR005845">
    <property type="entry name" value="A-D-PHexomutase_a/b/a-II"/>
</dbReference>
<dbReference type="InterPro" id="IPR005846">
    <property type="entry name" value="A-D-PHexomutase_a/b/a-III"/>
</dbReference>
<dbReference type="InterPro" id="IPR036900">
    <property type="entry name" value="A-D-PHexomutase_C_sf"/>
</dbReference>
<dbReference type="InterPro" id="IPR016066">
    <property type="entry name" value="A-D-PHexomutase_CS"/>
</dbReference>
<dbReference type="InterPro" id="IPR005841">
    <property type="entry name" value="Alpha-D-phosphohexomutase_SF"/>
</dbReference>
<dbReference type="InterPro" id="IPR045244">
    <property type="entry name" value="PGM"/>
</dbReference>
<dbReference type="NCBIfam" id="NF005737">
    <property type="entry name" value="PRK07564.1-1"/>
    <property type="match status" value="1"/>
</dbReference>
<dbReference type="PANTHER" id="PTHR22573:SF37">
    <property type="entry name" value="PHOSPHOGLUCOMUTASE-1"/>
    <property type="match status" value="1"/>
</dbReference>
<dbReference type="PANTHER" id="PTHR22573">
    <property type="entry name" value="PHOSPHOHEXOMUTASE FAMILY MEMBER"/>
    <property type="match status" value="1"/>
</dbReference>
<dbReference type="Pfam" id="PF24947">
    <property type="entry name" value="PGM1_C_vert_fung"/>
    <property type="match status" value="1"/>
</dbReference>
<dbReference type="Pfam" id="PF02878">
    <property type="entry name" value="PGM_PMM_I"/>
    <property type="match status" value="1"/>
</dbReference>
<dbReference type="Pfam" id="PF02879">
    <property type="entry name" value="PGM_PMM_II"/>
    <property type="match status" value="1"/>
</dbReference>
<dbReference type="Pfam" id="PF02880">
    <property type="entry name" value="PGM_PMM_III"/>
    <property type="match status" value="1"/>
</dbReference>
<dbReference type="PRINTS" id="PR00509">
    <property type="entry name" value="PGMPMM"/>
</dbReference>
<dbReference type="SUPFAM" id="SSF55957">
    <property type="entry name" value="Phosphoglucomutase, C-terminal domain"/>
    <property type="match status" value="1"/>
</dbReference>
<dbReference type="SUPFAM" id="SSF53738">
    <property type="entry name" value="Phosphoglucomutase, first 3 domains"/>
    <property type="match status" value="3"/>
</dbReference>
<dbReference type="PROSITE" id="PS00710">
    <property type="entry name" value="PGM_PMM"/>
    <property type="match status" value="1"/>
</dbReference>
<protein>
    <recommendedName>
        <fullName>Phosphoglucomutase-1</fullName>
        <shortName>PGM 1</shortName>
        <ecNumber evidence="4">5.4.2.2</ecNumber>
    </recommendedName>
    <alternativeName>
        <fullName>Glucose phosphomutase 1</fullName>
    </alternativeName>
</protein>
<gene>
    <name type="primary">PGM1</name>
</gene>
<accession>P00949</accession>
<accession>P38651</accession>
<keyword id="KW-0002">3D-structure</keyword>
<keyword id="KW-0007">Acetylation</keyword>
<keyword id="KW-0025">Alternative splicing</keyword>
<keyword id="KW-0119">Carbohydrate metabolism</keyword>
<keyword id="KW-0963">Cytoplasm</keyword>
<keyword id="KW-0903">Direct protein sequencing</keyword>
<keyword id="KW-0313">Glucose metabolism</keyword>
<keyword id="KW-0413">Isomerase</keyword>
<keyword id="KW-0460">Magnesium</keyword>
<keyword id="KW-0479">Metal-binding</keyword>
<keyword id="KW-0597">Phosphoprotein</keyword>
<keyword id="KW-1185">Reference proteome</keyword>
<keyword id="KW-0703">Sarcoplasmic reticulum</keyword>
<feature type="chain" id="PRO_0000147779" description="Phosphoglucomutase-1">
    <location>
        <begin position="1"/>
        <end position="562"/>
    </location>
</feature>
<feature type="active site" description="Phosphoserine intermediate" evidence="6">
    <location>
        <position position="117"/>
    </location>
</feature>
<feature type="binding site" evidence="8 13">
    <location>
        <position position="23"/>
    </location>
    <ligand>
        <name>alpha-D-glucose 1,6-bisphosphate</name>
        <dbReference type="ChEBI" id="CHEBI:58392"/>
    </ligand>
</feature>
<feature type="binding site" evidence="8 13">
    <location>
        <position position="117"/>
    </location>
    <ligand>
        <name>alpha-D-glucose 1,6-bisphosphate</name>
        <dbReference type="ChEBI" id="CHEBI:58392"/>
    </ligand>
</feature>
<feature type="binding site" description="via phosphate group" evidence="5 16">
    <location>
        <position position="117"/>
    </location>
    <ligand>
        <name>Mg(2+)</name>
        <dbReference type="ChEBI" id="CHEBI:18420"/>
    </ligand>
</feature>
<feature type="binding site" evidence="5 16">
    <location>
        <position position="288"/>
    </location>
    <ligand>
        <name>Mg(2+)</name>
        <dbReference type="ChEBI" id="CHEBI:18420"/>
    </ligand>
</feature>
<feature type="binding site" evidence="5 16">
    <location>
        <position position="290"/>
    </location>
    <ligand>
        <name>Mg(2+)</name>
        <dbReference type="ChEBI" id="CHEBI:18420"/>
    </ligand>
</feature>
<feature type="binding site" evidence="8 13">
    <location>
        <position position="292"/>
    </location>
    <ligand>
        <name>alpha-D-glucose 1,6-bisphosphate</name>
        <dbReference type="ChEBI" id="CHEBI:58392"/>
    </ligand>
</feature>
<feature type="binding site" evidence="5 16">
    <location>
        <position position="292"/>
    </location>
    <ligand>
        <name>Mg(2+)</name>
        <dbReference type="ChEBI" id="CHEBI:18420"/>
    </ligand>
</feature>
<feature type="binding site" evidence="8 13">
    <location>
        <position position="293"/>
    </location>
    <ligand>
        <name>alpha-D-glucose 1,6-bisphosphate</name>
        <dbReference type="ChEBI" id="CHEBI:58392"/>
    </ligand>
</feature>
<feature type="binding site" evidence="8 13">
    <location>
        <position position="357"/>
    </location>
    <ligand>
        <name>alpha-D-glucose 1,6-bisphosphate</name>
        <dbReference type="ChEBI" id="CHEBI:58392"/>
    </ligand>
</feature>
<feature type="binding site" evidence="8 13">
    <location>
        <position position="376"/>
    </location>
    <ligand>
        <name>alpha-D-glucose 1,6-bisphosphate</name>
        <dbReference type="ChEBI" id="CHEBI:58392"/>
    </ligand>
</feature>
<feature type="binding site" evidence="8 13">
    <location>
        <position position="378"/>
    </location>
    <ligand>
        <name>alpha-D-glucose 1,6-bisphosphate</name>
        <dbReference type="ChEBI" id="CHEBI:58392"/>
    </ligand>
</feature>
<feature type="binding site" evidence="8 13">
    <location>
        <position position="389"/>
    </location>
    <ligand>
        <name>alpha-D-glucose 1,6-bisphosphate</name>
        <dbReference type="ChEBI" id="CHEBI:58392"/>
    </ligand>
</feature>
<feature type="modified residue" description="N-acetylmethionine" evidence="1">
    <location>
        <position position="1"/>
    </location>
</feature>
<feature type="modified residue" description="N6-acetyllysine" evidence="1">
    <location>
        <position position="16"/>
    </location>
</feature>
<feature type="modified residue" description="Phosphothreonine" evidence="3">
    <location>
        <position position="115"/>
    </location>
</feature>
<feature type="modified residue" description="Phosphoserine" evidence="5 16">
    <location>
        <position position="117"/>
    </location>
</feature>
<feature type="modified residue" description="Phosphoserine" evidence="2">
    <location>
        <position position="134"/>
    </location>
</feature>
<feature type="modified residue" description="Phosphothreonine" evidence="1">
    <location>
        <position position="185"/>
    </location>
</feature>
<feature type="modified residue" description="Phosphoserine" evidence="2">
    <location>
        <position position="213"/>
    </location>
</feature>
<feature type="modified residue" description="N6-acetyllysine" evidence="3">
    <location>
        <position position="349"/>
    </location>
</feature>
<feature type="modified residue" description="Phosphotyrosine" evidence="3">
    <location>
        <position position="353"/>
    </location>
</feature>
<feature type="modified residue" description="Phosphoserine" evidence="2">
    <location>
        <position position="369"/>
    </location>
</feature>
<feature type="modified residue" description="Phosphoserine" evidence="1">
    <location>
        <position position="378"/>
    </location>
</feature>
<feature type="modified residue" description="N6-succinyllysine" evidence="3">
    <location>
        <position position="419"/>
    </location>
</feature>
<feature type="modified residue" description="Phosphothreonine; by PAK1" evidence="1">
    <location>
        <position position="467"/>
    </location>
</feature>
<feature type="modified residue" description="Phosphoserine" evidence="2">
    <location>
        <position position="485"/>
    </location>
</feature>
<feature type="modified residue" description="Phosphoserine" evidence="1">
    <location>
        <position position="505"/>
    </location>
</feature>
<feature type="modified residue" description="Phosphothreonine" evidence="3">
    <location>
        <position position="507"/>
    </location>
</feature>
<feature type="modified residue" description="Phosphoserine" evidence="1">
    <location>
        <position position="509"/>
    </location>
</feature>
<feature type="modified residue" description="Phosphoserine" evidence="2">
    <location>
        <position position="541"/>
    </location>
</feature>
<feature type="splice variant" id="VSP_004690" description="In isoform 2." evidence="9">
    <original>MVKIVTVKTKAYP</original>
    <variation>MEEGPLPLLTIRTAPYH</variation>
    <location>
        <begin position="1"/>
        <end position="13"/>
    </location>
</feature>
<feature type="splice variant" id="VSP_004691" description="In isoform 2." evidence="9">
    <original>RVKVFQSSTNYA</original>
    <variation>KTYYFEDKPCYL</variation>
    <location>
        <begin position="25"/>
        <end position="36"/>
    </location>
</feature>
<feature type="splice variant" id="VSP_004692" description="In isoform 2." evidence="9">
    <original>ISTVEPAQRQEAT</original>
    <variation>FFSIDLKDRQGSS</variation>
    <location>
        <begin position="44"/>
        <end position="56"/>
    </location>
</feature>
<feature type="splice variant" id="VSP_004693" description="In isoform 2." evidence="9">
    <original>FYMKEAIQLIVRI</original>
    <variation>YFNKSAIETILQM</variation>
    <location>
        <begin position="65"/>
        <end position="77"/>
    </location>
</feature>
<feature type="strand" evidence="20">
    <location>
        <begin position="5"/>
        <end position="8"/>
    </location>
</feature>
<feature type="strand" evidence="20">
    <location>
        <begin position="21"/>
        <end position="25"/>
    </location>
</feature>
<feature type="helix" evidence="20">
    <location>
        <begin position="26"/>
        <end position="31"/>
    </location>
</feature>
<feature type="helix" evidence="20">
    <location>
        <begin position="35"/>
        <end position="45"/>
    </location>
</feature>
<feature type="helix" evidence="20">
    <location>
        <begin position="49"/>
        <end position="51"/>
    </location>
</feature>
<feature type="turn" evidence="20">
    <location>
        <begin position="52"/>
        <end position="54"/>
    </location>
</feature>
<feature type="strand" evidence="20">
    <location>
        <begin position="56"/>
        <end position="61"/>
    </location>
</feature>
<feature type="helix" evidence="20">
    <location>
        <begin position="67"/>
        <end position="80"/>
    </location>
</feature>
<feature type="strand" evidence="20">
    <location>
        <begin position="85"/>
        <end position="93"/>
    </location>
</feature>
<feature type="helix" evidence="20">
    <location>
        <begin position="96"/>
        <end position="106"/>
    </location>
</feature>
<feature type="strand" evidence="20">
    <location>
        <begin position="109"/>
        <end position="114"/>
    </location>
</feature>
<feature type="strand" evidence="20">
    <location>
        <begin position="125"/>
        <end position="133"/>
    </location>
</feature>
<feature type="strand" evidence="20">
    <location>
        <begin position="136"/>
        <end position="138"/>
    </location>
</feature>
<feature type="helix" evidence="20">
    <location>
        <begin position="141"/>
        <end position="153"/>
    </location>
</feature>
<feature type="strand" evidence="20">
    <location>
        <begin position="156"/>
        <end position="159"/>
    </location>
</feature>
<feature type="strand" evidence="18">
    <location>
        <begin position="167"/>
        <end position="169"/>
    </location>
</feature>
<feature type="strand" evidence="20">
    <location>
        <begin position="171"/>
        <end position="175"/>
    </location>
</feature>
<feature type="strand" evidence="20">
    <location>
        <begin position="184"/>
        <end position="189"/>
    </location>
</feature>
<feature type="helix" evidence="20">
    <location>
        <begin position="193"/>
        <end position="200"/>
    </location>
</feature>
<feature type="helix" evidence="20">
    <location>
        <begin position="205"/>
        <end position="213"/>
    </location>
</feature>
<feature type="strand" evidence="17">
    <location>
        <begin position="214"/>
        <end position="216"/>
    </location>
</feature>
<feature type="strand" evidence="20">
    <location>
        <begin position="220"/>
        <end position="223"/>
    </location>
</feature>
<feature type="helix" evidence="20">
    <location>
        <begin position="230"/>
        <end position="237"/>
    </location>
</feature>
<feature type="turn" evidence="20">
    <location>
        <begin position="238"/>
        <end position="241"/>
    </location>
</feature>
<feature type="helix" evidence="20">
    <location>
        <begin position="245"/>
        <end position="247"/>
    </location>
</feature>
<feature type="strand" evidence="20">
    <location>
        <begin position="248"/>
        <end position="250"/>
    </location>
</feature>
<feature type="helix" evidence="20">
    <location>
        <begin position="257"/>
        <end position="259"/>
    </location>
</feature>
<feature type="turn" evidence="20">
    <location>
        <begin position="266"/>
        <end position="269"/>
    </location>
</feature>
<feature type="helix" evidence="20">
    <location>
        <begin position="270"/>
        <end position="277"/>
    </location>
</feature>
<feature type="strand" evidence="20">
    <location>
        <begin position="282"/>
        <end position="287"/>
    </location>
</feature>
<feature type="strand" evidence="17">
    <location>
        <begin position="289"/>
        <end position="291"/>
    </location>
</feature>
<feature type="strand" evidence="20">
    <location>
        <begin position="294"/>
        <end position="298"/>
    </location>
</feature>
<feature type="helix" evidence="20">
    <location>
        <begin position="299"/>
        <end position="301"/>
    </location>
</feature>
<feature type="helix" evidence="20">
    <location>
        <begin position="306"/>
        <end position="315"/>
    </location>
</feature>
<feature type="helix" evidence="20">
    <location>
        <begin position="317"/>
        <end position="319"/>
    </location>
</feature>
<feature type="helix" evidence="20">
    <location>
        <begin position="321"/>
        <end position="326"/>
    </location>
</feature>
<feature type="strand" evidence="20">
    <location>
        <begin position="331"/>
        <end position="334"/>
    </location>
</feature>
<feature type="helix" evidence="20">
    <location>
        <begin position="340"/>
        <end position="346"/>
    </location>
</feature>
<feature type="strand" evidence="20">
    <location>
        <begin position="348"/>
        <end position="350"/>
    </location>
</feature>
<feature type="strand" evidence="20">
    <location>
        <begin position="352"/>
        <end position="355"/>
    </location>
</feature>
<feature type="helix" evidence="20">
    <location>
        <begin position="359"/>
        <end position="367"/>
    </location>
</feature>
<feature type="strand" evidence="20">
    <location>
        <begin position="372"/>
        <end position="376"/>
    </location>
</feature>
<feature type="turn" evidence="20">
    <location>
        <begin position="377"/>
        <end position="379"/>
    </location>
</feature>
<feature type="strand" evidence="20">
    <location>
        <begin position="380"/>
        <end position="383"/>
    </location>
</feature>
<feature type="strand" evidence="20">
    <location>
        <begin position="386"/>
        <end position="388"/>
    </location>
</feature>
<feature type="helix" evidence="20">
    <location>
        <begin position="391"/>
        <end position="405"/>
    </location>
</feature>
<feature type="helix" evidence="20">
    <location>
        <begin position="409"/>
        <end position="420"/>
    </location>
</feature>
<feature type="strand" evidence="20">
    <location>
        <begin position="422"/>
        <end position="433"/>
    </location>
</feature>
<feature type="helix" evidence="20">
    <location>
        <begin position="435"/>
        <end position="450"/>
    </location>
</feature>
<feature type="turn" evidence="17">
    <location>
        <begin position="452"/>
        <end position="456"/>
    </location>
</feature>
<feature type="strand" evidence="20">
    <location>
        <begin position="458"/>
        <end position="461"/>
    </location>
</feature>
<feature type="strand" evidence="20">
    <location>
        <begin position="464"/>
        <end position="473"/>
    </location>
</feature>
<feature type="turn" evidence="20">
    <location>
        <begin position="479"/>
        <end position="481"/>
    </location>
</feature>
<feature type="strand" evidence="20">
    <location>
        <begin position="490"/>
        <end position="494"/>
    </location>
</feature>
<feature type="turn" evidence="19">
    <location>
        <begin position="495"/>
        <end position="497"/>
    </location>
</feature>
<feature type="strand" evidence="20">
    <location>
        <begin position="499"/>
        <end position="506"/>
    </location>
</feature>
<feature type="strand" evidence="20">
    <location>
        <begin position="508"/>
        <end position="510"/>
    </location>
</feature>
<feature type="strand" evidence="20">
    <location>
        <begin position="512"/>
        <end position="522"/>
    </location>
</feature>
<feature type="turn" evidence="20">
    <location>
        <begin position="525"/>
        <end position="529"/>
    </location>
</feature>
<feature type="helix" evidence="20">
    <location>
        <begin position="532"/>
        <end position="547"/>
    </location>
</feature>
<feature type="helix" evidence="20">
    <location>
        <begin position="549"/>
        <end position="553"/>
    </location>
</feature>
<feature type="strand" evidence="20">
    <location>
        <begin position="559"/>
        <end position="562"/>
    </location>
</feature>
<name>PGM1_RABIT</name>
<sequence>MVKIVTVKTKAYPDQKPGTSGLRKRVKVFQSSTNYAENFIQSIISTVEPAQRQEATLVVGGDGRFYMKEAIQLIVRIAAANGIGRLVIGQNGILSTPAVSCIIRKIKAIGGIILTASHNPGGPNGDFGIKFNISNGGPAPEAITDKIFQISKTIEEYAICPDLKVDLGVLGKQQFDLENKFKPFTVEIVDSVEAYATMLRNIFDFNALKELLSGPNRLKIRIDAMHGVVGPYVKKILCEELGAPANSAVNCVPLEDFGGHHPDPNLTYAADLVETMKSGEHDFGAAFDGDGDRNMILGKHGFFVNPSDSVAVIAANIFSIPYFQQTGVRGFARSMPTSGALDRVANATKIALYETPTGWKFFGNLMDASKLSLCGEESFGTGSDHIREKDGLWAVLAWLSILATRKQSVEDILKDHWHKFGRNFFTRYDYEEVEAEGATKMMKDLEALMFDRSFVGKQFSANDKVYTVEKADNFEYHDPVDGSVSKNQGLRLIFADGSRIIFRLSGTGSAGATIRLYIDSYEKDNAKINQDPQVMLAPLISIALKVSQLQERTGRTAPTVIT</sequence>
<reference key="1">
    <citation type="journal article" date="1983" name="J. Biol. Chem.">
        <title>The complete amino acid sequence of rabbit muscle phosphoglucomutase.</title>
        <authorList>
            <person name="Ray W.J. Jr."/>
            <person name="Hermodson M.A."/>
            <person name="Puvathingal J.M."/>
            <person name="Mahoney W.C."/>
        </authorList>
    </citation>
    <scope>PROTEIN SEQUENCE (ISOFORM 1)</scope>
    <source>
        <tissue>Muscle</tissue>
    </source>
</reference>
<reference key="2">
    <citation type="journal article" date="1992" name="Proc. Natl. Acad. Sci. U.S.A.">
        <title>Phosphoglucomutase 1: complete human and rabbit mRNA sequences and direct mapping of this highly polymorphic marker on human chromosome 1.</title>
        <authorList>
            <person name="Whitehouse D.B."/>
            <person name="Putt W."/>
            <person name="Lovegrove J.U."/>
            <person name="Morrison K.E."/>
            <person name="Hollyoake M."/>
            <person name="Fox M.F."/>
            <person name="Hopkinson D.A."/>
            <person name="Edwards Y.H."/>
        </authorList>
    </citation>
    <scope>NUCLEOTIDE SEQUENCE [MRNA] (ISOFORM 1)</scope>
</reference>
<reference key="3">
    <citation type="journal article" date="1992" name="J. Biol. Chem.">
        <title>Purification, characterization, and molecular cloning of a 60-kDa phosphoprotein in rabbit skeletal sarcoplasmic reticulum which is an isoform of phosphoglucomutase.</title>
        <authorList>
            <person name="Lee Y.S."/>
            <person name="Marks A.R."/>
            <person name="Gureckas N."/>
            <person name="Lacro R."/>
            <person name="Nadal-Ginard B."/>
            <person name="Kim D.H."/>
        </authorList>
    </citation>
    <scope>NUCLEOTIDE SEQUENCE [MRNA] (ISOFORM 2)</scope>
    <scope>FUNCTION</scope>
    <scope>SUBCELLULAR LOCATION</scope>
    <scope>CATALYTIC ACTIVITY</scope>
    <source>
        <tissue>Skeletal muscle</tissue>
    </source>
</reference>
<reference key="4">
    <citation type="journal article" date="1968" name="Biochem. J.">
        <title>A tryptic peptide containing a unique serine phosphate residue in rabbit phosphoglucomutase.</title>
        <authorList>
            <person name="Milstein C.P."/>
            <person name="Milstein C."/>
        </authorList>
    </citation>
    <scope>ACTIVE SITE</scope>
</reference>
<reference key="5">
    <citation type="journal article" date="1992" name="J. Biol. Chem.">
        <title>The crystal structure of muscle phosphoglucomutase refined at 2.7-A resolution.</title>
        <authorList>
            <person name="Dai J.-B."/>
            <person name="Liu Y."/>
            <person name="Ray W.J. Jr."/>
            <person name="Konno M."/>
        </authorList>
    </citation>
    <scope>X-RAY CRYSTALLOGRAPHY (2.70 ANGSTROMS)</scope>
</reference>
<reference key="6">
    <citation type="journal article" date="1997" name="Acta Crystallogr. D">
        <title>Enhanced diffractivity of phosphoglucomutase crystals. Use of an alternative cryocrystallographic procedure.</title>
        <authorList>
            <person name="Ray W.J. Jr."/>
            <person name="Baranidharan S."/>
            <person name="Liu Y."/>
        </authorList>
    </citation>
    <scope>X-RAY CRYSTALLOGRAPHY (2.70 ANGSTROMS)</scope>
</reference>
<reference evidence="15 16" key="7">
    <citation type="journal article" date="1997" name="Acta Crystallogr. D">
        <title>Structure of rabbit muscle phosphoglucomutase refined at 2.4-A resolution.</title>
        <authorList>
            <person name="Liu Y."/>
            <person name="Ray W.J. Jr."/>
            <person name="Baranidharan S."/>
        </authorList>
    </citation>
    <scope>X-RAY CRYSTALLOGRAPHY (2.40 ANGSTROMS) IN COMPLEX WITH MAGNESIUM</scope>
    <scope>SUBUNIT</scope>
    <scope>ACTIVITY REGULATION</scope>
    <scope>PHOSPHORYLATION AT SER-117</scope>
</reference>
<reference evidence="13" key="8">
    <citation type="submission" date="1999-08" db="PDB data bank">
        <title>Binding driven structural changes in crystaline phosphoglucomutase associated with chemical reaction.</title>
        <authorList>
            <person name="Baranidharan S."/>
            <person name="Ray W.J. Jr."/>
            <person name="Liu Y."/>
        </authorList>
    </citation>
    <scope>X-RAY CRYSTALLOGRAPHY (2.70 ANGSTROMS) IN COMPLEX WITH ALPHA-D-GLUCOSE 1,6-BISPHOSPHATE</scope>
</reference>
<reference evidence="14" key="9">
    <citation type="submission" date="1999-08" db="PDB data bank">
        <title>Structural relationships at the active site of Phos in analog complexes.</title>
        <authorList>
            <person name="Baranidharan S."/>
            <person name="Ray W.J. Jr."/>
        </authorList>
    </citation>
    <scope>X-RAY CRYSTALLOGRAPHY (2.70 ANGSTROMS) IN COMPLEX WITH SUBSTRATE ANALOG</scope>
</reference>
<organism>
    <name type="scientific">Oryctolagus cuniculus</name>
    <name type="common">Rabbit</name>
    <dbReference type="NCBI Taxonomy" id="9986"/>
    <lineage>
        <taxon>Eukaryota</taxon>
        <taxon>Metazoa</taxon>
        <taxon>Chordata</taxon>
        <taxon>Craniata</taxon>
        <taxon>Vertebrata</taxon>
        <taxon>Euteleostomi</taxon>
        <taxon>Mammalia</taxon>
        <taxon>Eutheria</taxon>
        <taxon>Euarchontoglires</taxon>
        <taxon>Glires</taxon>
        <taxon>Lagomorpha</taxon>
        <taxon>Leporidae</taxon>
        <taxon>Oryctolagus</taxon>
    </lineage>
</organism>
<proteinExistence type="evidence at protein level"/>